<feature type="chain" id="PRO_0000219962" description="PqqA binding protein">
    <location>
        <begin position="1"/>
        <end position="96"/>
    </location>
</feature>
<name>PQQD_GLUOX</name>
<comment type="function">
    <text>Functions as a PqqA binding protein and presents PqqA to PqqE, in the pyrroloquinoline quinone (PQQ) biosynthetic pathway.</text>
</comment>
<comment type="pathway">
    <text>Cofactor biosynthesis; pyrroloquinoline quinone biosynthesis.</text>
</comment>
<comment type="subunit">
    <text>Monomer. Interacts with PqqE.</text>
</comment>
<comment type="similarity">
    <text evidence="1">Belongs to the PqqD family.</text>
</comment>
<organism>
    <name type="scientific">Gluconobacter oxydans (strain 621H)</name>
    <name type="common">Gluconobacter suboxydans</name>
    <dbReference type="NCBI Taxonomy" id="290633"/>
    <lineage>
        <taxon>Bacteria</taxon>
        <taxon>Pseudomonadati</taxon>
        <taxon>Pseudomonadota</taxon>
        <taxon>Alphaproteobacteria</taxon>
        <taxon>Acetobacterales</taxon>
        <taxon>Acetobacteraceae</taxon>
        <taxon>Gluconobacter</taxon>
    </lineage>
</organism>
<keyword id="KW-0884">PQQ biosynthesis</keyword>
<keyword id="KW-1185">Reference proteome</keyword>
<dbReference type="EMBL" id="AJ277117">
    <property type="protein sequence ID" value="CAB83200.1"/>
    <property type="molecule type" value="Genomic_DNA"/>
</dbReference>
<dbReference type="EMBL" id="CP000009">
    <property type="protein sequence ID" value="AAW60756.1"/>
    <property type="molecule type" value="Genomic_DNA"/>
</dbReference>
<dbReference type="RefSeq" id="WP_011252551.1">
    <property type="nucleotide sequence ID" value="NC_006677.1"/>
</dbReference>
<dbReference type="SMR" id="Q9L3B1"/>
<dbReference type="STRING" id="290633.GOX0984"/>
<dbReference type="KEGG" id="gox:GOX0984"/>
<dbReference type="HOGENOM" id="CLU_163864_0_0_5"/>
<dbReference type="UniPathway" id="UPA00539"/>
<dbReference type="Proteomes" id="UP000006375">
    <property type="component" value="Chromosome"/>
</dbReference>
<dbReference type="GO" id="GO:0048038">
    <property type="term" value="F:quinone binding"/>
    <property type="evidence" value="ECO:0007669"/>
    <property type="project" value="InterPro"/>
</dbReference>
<dbReference type="GO" id="GO:0018189">
    <property type="term" value="P:pyrroloquinoline quinone biosynthetic process"/>
    <property type="evidence" value="ECO:0007669"/>
    <property type="project" value="UniProtKB-UniRule"/>
</dbReference>
<dbReference type="Gene3D" id="1.10.10.1150">
    <property type="entry name" value="Coenzyme PQQ synthesis protein D (PqqD)"/>
    <property type="match status" value="1"/>
</dbReference>
<dbReference type="HAMAP" id="MF_00655">
    <property type="entry name" value="PQQ_syn_PqqD"/>
    <property type="match status" value="1"/>
</dbReference>
<dbReference type="InterPro" id="IPR008792">
    <property type="entry name" value="PQQD"/>
</dbReference>
<dbReference type="InterPro" id="IPR022479">
    <property type="entry name" value="PqqD_bac"/>
</dbReference>
<dbReference type="InterPro" id="IPR041881">
    <property type="entry name" value="PqqD_sf"/>
</dbReference>
<dbReference type="NCBIfam" id="TIGR03859">
    <property type="entry name" value="PQQ_PqqD"/>
    <property type="match status" value="1"/>
</dbReference>
<dbReference type="Pfam" id="PF05402">
    <property type="entry name" value="PqqD"/>
    <property type="match status" value="1"/>
</dbReference>
<protein>
    <recommendedName>
        <fullName>PqqA binding protein</fullName>
    </recommendedName>
    <alternativeName>
        <fullName>Coenzyme PQQ synthesis protein D</fullName>
    </alternativeName>
    <alternativeName>
        <fullName>Pyrroloquinoline quinone biosynthesis protein D</fullName>
    </alternativeName>
</protein>
<gene>
    <name type="primary">pqqD</name>
    <name type="ordered locus">GOX0984</name>
</gene>
<proteinExistence type="inferred from homology"/>
<sequence>MTEAPHVVAEGTVLSFARGHRLQHDRVRDVWIVQAPEKAFVVEGAAPHILRLLDGKRSVGEIIQQLAIEFSAPREVIAKDVLALLSELTEKNVLHT</sequence>
<accession>Q9L3B1</accession>
<accession>Q5FS90</accession>
<reference key="1">
    <citation type="journal article" date="2000" name="FEMS Microbiol. Lett.">
        <title>The pyrroloquinoline quinone synthesis genes of Gluconobacter oxydans.</title>
        <authorList>
            <person name="Felder M."/>
            <person name="Gupta A."/>
            <person name="Verma V."/>
            <person name="Kumar A."/>
            <person name="Qazi G.N."/>
            <person name="Cullum J."/>
        </authorList>
    </citation>
    <scope>NUCLEOTIDE SEQUENCE [GENOMIC DNA]</scope>
    <source>
        <strain>ATCC 9937 / LMG 1404 / NCIMB 8084</strain>
    </source>
</reference>
<reference key="2">
    <citation type="journal article" date="2005" name="Nat. Biotechnol.">
        <title>Complete genome sequence of the acetic acid bacterium Gluconobacter oxydans.</title>
        <authorList>
            <person name="Prust C."/>
            <person name="Hoffmeister M."/>
            <person name="Liesegang H."/>
            <person name="Wiezer A."/>
            <person name="Fricke W.F."/>
            <person name="Ehrenreich A."/>
            <person name="Gottschalk G."/>
            <person name="Deppenmeier U."/>
        </authorList>
    </citation>
    <scope>NUCLEOTIDE SEQUENCE [LARGE SCALE GENOMIC DNA]</scope>
    <source>
        <strain>621H</strain>
    </source>
</reference>
<evidence type="ECO:0000305" key="1"/>